<sequence length="226" mass="25353">MEPIKNLPRLCRTLSYEFKNIELLTQALTHRSAANKHNERLEFLGDSILSIVISDALYHQFPKATEGDLSRMRATLVRGDTLTIIAQEFKLGDYLYLGPGELKSGGFRRESILADAVEAIIGAVYLDSDLEVCRALLLKWYAERLAEIQPGISQKDAKTLLQEHLQGFKKPLPDYQVINIEGDAHDQTFTVECRIEDLSQSVIGVASSRRKAEQIAAAQVLELLKK</sequence>
<feature type="chain" id="PRO_1000075808" description="Ribonuclease 3">
    <location>
        <begin position="1"/>
        <end position="226"/>
    </location>
</feature>
<feature type="domain" description="RNase III" evidence="1">
    <location>
        <begin position="7"/>
        <end position="129"/>
    </location>
</feature>
<feature type="domain" description="DRBM" evidence="1">
    <location>
        <begin position="156"/>
        <end position="226"/>
    </location>
</feature>
<feature type="active site" evidence="1">
    <location>
        <position position="46"/>
    </location>
</feature>
<feature type="active site" evidence="1">
    <location>
        <position position="118"/>
    </location>
</feature>
<feature type="binding site" evidence="1">
    <location>
        <position position="42"/>
    </location>
    <ligand>
        <name>Mg(2+)</name>
        <dbReference type="ChEBI" id="CHEBI:18420"/>
    </ligand>
</feature>
<feature type="binding site" evidence="1">
    <location>
        <position position="115"/>
    </location>
    <ligand>
        <name>Mg(2+)</name>
        <dbReference type="ChEBI" id="CHEBI:18420"/>
    </ligand>
</feature>
<feature type="binding site" evidence="1">
    <location>
        <position position="118"/>
    </location>
    <ligand>
        <name>Mg(2+)</name>
        <dbReference type="ChEBI" id="CHEBI:18420"/>
    </ligand>
</feature>
<name>RNC_SHEB5</name>
<proteinExistence type="inferred from homology"/>
<comment type="function">
    <text evidence="1">Digests double-stranded RNA. Involved in the processing of primary rRNA transcript to yield the immediate precursors to the large and small rRNAs (23S and 16S). Processes some mRNAs, and tRNAs when they are encoded in the rRNA operon. Processes pre-crRNA and tracrRNA of type II CRISPR loci if present in the organism.</text>
</comment>
<comment type="catalytic activity">
    <reaction evidence="1">
        <text>Endonucleolytic cleavage to 5'-phosphomonoester.</text>
        <dbReference type="EC" id="3.1.26.3"/>
    </reaction>
</comment>
<comment type="cofactor">
    <cofactor evidence="1">
        <name>Mg(2+)</name>
        <dbReference type="ChEBI" id="CHEBI:18420"/>
    </cofactor>
</comment>
<comment type="subunit">
    <text evidence="1">Homodimer.</text>
</comment>
<comment type="subcellular location">
    <subcellularLocation>
        <location evidence="1">Cytoplasm</location>
    </subcellularLocation>
</comment>
<comment type="similarity">
    <text evidence="1">Belongs to the ribonuclease III family.</text>
</comment>
<gene>
    <name evidence="1" type="primary">rnc</name>
    <name type="ordered locus">Sbal_1201</name>
</gene>
<protein>
    <recommendedName>
        <fullName evidence="1">Ribonuclease 3</fullName>
        <ecNumber evidence="1">3.1.26.3</ecNumber>
    </recommendedName>
    <alternativeName>
        <fullName evidence="1">Ribonuclease III</fullName>
        <shortName evidence="1">RNase III</shortName>
    </alternativeName>
</protein>
<evidence type="ECO:0000255" key="1">
    <source>
        <dbReference type="HAMAP-Rule" id="MF_00104"/>
    </source>
</evidence>
<organism>
    <name type="scientific">Shewanella baltica (strain OS155 / ATCC BAA-1091)</name>
    <dbReference type="NCBI Taxonomy" id="325240"/>
    <lineage>
        <taxon>Bacteria</taxon>
        <taxon>Pseudomonadati</taxon>
        <taxon>Pseudomonadota</taxon>
        <taxon>Gammaproteobacteria</taxon>
        <taxon>Alteromonadales</taxon>
        <taxon>Shewanellaceae</taxon>
        <taxon>Shewanella</taxon>
    </lineage>
</organism>
<keyword id="KW-0963">Cytoplasm</keyword>
<keyword id="KW-0255">Endonuclease</keyword>
<keyword id="KW-0378">Hydrolase</keyword>
<keyword id="KW-0460">Magnesium</keyword>
<keyword id="KW-0479">Metal-binding</keyword>
<keyword id="KW-0507">mRNA processing</keyword>
<keyword id="KW-0540">Nuclease</keyword>
<keyword id="KW-1185">Reference proteome</keyword>
<keyword id="KW-0694">RNA-binding</keyword>
<keyword id="KW-0698">rRNA processing</keyword>
<keyword id="KW-0699">rRNA-binding</keyword>
<keyword id="KW-0819">tRNA processing</keyword>
<dbReference type="EC" id="3.1.26.3" evidence="1"/>
<dbReference type="EMBL" id="CP000563">
    <property type="protein sequence ID" value="ABN60719.1"/>
    <property type="molecule type" value="Genomic_DNA"/>
</dbReference>
<dbReference type="RefSeq" id="WP_006080779.1">
    <property type="nucleotide sequence ID" value="NC_009052.1"/>
</dbReference>
<dbReference type="SMR" id="A3D1V6"/>
<dbReference type="STRING" id="325240.Sbal_1201"/>
<dbReference type="GeneID" id="11771546"/>
<dbReference type="KEGG" id="sbl:Sbal_1201"/>
<dbReference type="HOGENOM" id="CLU_000907_1_1_6"/>
<dbReference type="OrthoDB" id="9805026at2"/>
<dbReference type="Proteomes" id="UP000001557">
    <property type="component" value="Chromosome"/>
</dbReference>
<dbReference type="GO" id="GO:0005737">
    <property type="term" value="C:cytoplasm"/>
    <property type="evidence" value="ECO:0007669"/>
    <property type="project" value="UniProtKB-SubCell"/>
</dbReference>
<dbReference type="GO" id="GO:0003725">
    <property type="term" value="F:double-stranded RNA binding"/>
    <property type="evidence" value="ECO:0007669"/>
    <property type="project" value="TreeGrafter"/>
</dbReference>
<dbReference type="GO" id="GO:0046872">
    <property type="term" value="F:metal ion binding"/>
    <property type="evidence" value="ECO:0007669"/>
    <property type="project" value="UniProtKB-KW"/>
</dbReference>
<dbReference type="GO" id="GO:0004525">
    <property type="term" value="F:ribonuclease III activity"/>
    <property type="evidence" value="ECO:0007669"/>
    <property type="project" value="UniProtKB-UniRule"/>
</dbReference>
<dbReference type="GO" id="GO:0019843">
    <property type="term" value="F:rRNA binding"/>
    <property type="evidence" value="ECO:0007669"/>
    <property type="project" value="UniProtKB-KW"/>
</dbReference>
<dbReference type="GO" id="GO:0006397">
    <property type="term" value="P:mRNA processing"/>
    <property type="evidence" value="ECO:0007669"/>
    <property type="project" value="UniProtKB-UniRule"/>
</dbReference>
<dbReference type="GO" id="GO:0010468">
    <property type="term" value="P:regulation of gene expression"/>
    <property type="evidence" value="ECO:0007669"/>
    <property type="project" value="TreeGrafter"/>
</dbReference>
<dbReference type="GO" id="GO:0006364">
    <property type="term" value="P:rRNA processing"/>
    <property type="evidence" value="ECO:0007669"/>
    <property type="project" value="UniProtKB-UniRule"/>
</dbReference>
<dbReference type="GO" id="GO:0008033">
    <property type="term" value="P:tRNA processing"/>
    <property type="evidence" value="ECO:0007669"/>
    <property type="project" value="UniProtKB-KW"/>
</dbReference>
<dbReference type="CDD" id="cd10845">
    <property type="entry name" value="DSRM_RNAse_III_family"/>
    <property type="match status" value="1"/>
</dbReference>
<dbReference type="CDD" id="cd00593">
    <property type="entry name" value="RIBOc"/>
    <property type="match status" value="1"/>
</dbReference>
<dbReference type="FunFam" id="1.10.1520.10:FF:000001">
    <property type="entry name" value="Ribonuclease 3"/>
    <property type="match status" value="1"/>
</dbReference>
<dbReference type="FunFam" id="3.30.160.20:FF:000003">
    <property type="entry name" value="Ribonuclease 3"/>
    <property type="match status" value="1"/>
</dbReference>
<dbReference type="Gene3D" id="3.30.160.20">
    <property type="match status" value="1"/>
</dbReference>
<dbReference type="Gene3D" id="1.10.1520.10">
    <property type="entry name" value="Ribonuclease III domain"/>
    <property type="match status" value="1"/>
</dbReference>
<dbReference type="HAMAP" id="MF_00104">
    <property type="entry name" value="RNase_III"/>
    <property type="match status" value="1"/>
</dbReference>
<dbReference type="InterPro" id="IPR014720">
    <property type="entry name" value="dsRBD_dom"/>
</dbReference>
<dbReference type="InterPro" id="IPR011907">
    <property type="entry name" value="RNase_III"/>
</dbReference>
<dbReference type="InterPro" id="IPR000999">
    <property type="entry name" value="RNase_III_dom"/>
</dbReference>
<dbReference type="InterPro" id="IPR036389">
    <property type="entry name" value="RNase_III_sf"/>
</dbReference>
<dbReference type="NCBIfam" id="TIGR02191">
    <property type="entry name" value="RNaseIII"/>
    <property type="match status" value="1"/>
</dbReference>
<dbReference type="PANTHER" id="PTHR11207:SF0">
    <property type="entry name" value="RIBONUCLEASE 3"/>
    <property type="match status" value="1"/>
</dbReference>
<dbReference type="PANTHER" id="PTHR11207">
    <property type="entry name" value="RIBONUCLEASE III"/>
    <property type="match status" value="1"/>
</dbReference>
<dbReference type="Pfam" id="PF00035">
    <property type="entry name" value="dsrm"/>
    <property type="match status" value="1"/>
</dbReference>
<dbReference type="Pfam" id="PF14622">
    <property type="entry name" value="Ribonucleas_3_3"/>
    <property type="match status" value="1"/>
</dbReference>
<dbReference type="SMART" id="SM00358">
    <property type="entry name" value="DSRM"/>
    <property type="match status" value="1"/>
</dbReference>
<dbReference type="SMART" id="SM00535">
    <property type="entry name" value="RIBOc"/>
    <property type="match status" value="1"/>
</dbReference>
<dbReference type="SUPFAM" id="SSF54768">
    <property type="entry name" value="dsRNA-binding domain-like"/>
    <property type="match status" value="1"/>
</dbReference>
<dbReference type="SUPFAM" id="SSF69065">
    <property type="entry name" value="RNase III domain-like"/>
    <property type="match status" value="1"/>
</dbReference>
<dbReference type="PROSITE" id="PS50137">
    <property type="entry name" value="DS_RBD"/>
    <property type="match status" value="1"/>
</dbReference>
<dbReference type="PROSITE" id="PS00517">
    <property type="entry name" value="RNASE_3_1"/>
    <property type="match status" value="1"/>
</dbReference>
<dbReference type="PROSITE" id="PS50142">
    <property type="entry name" value="RNASE_3_2"/>
    <property type="match status" value="1"/>
</dbReference>
<accession>A3D1V6</accession>
<reference key="1">
    <citation type="submission" date="2007-02" db="EMBL/GenBank/DDBJ databases">
        <title>Complete sequence of chromosome of Shewanella baltica OS155.</title>
        <authorList>
            <consortium name="US DOE Joint Genome Institute"/>
            <person name="Copeland A."/>
            <person name="Lucas S."/>
            <person name="Lapidus A."/>
            <person name="Barry K."/>
            <person name="Detter J.C."/>
            <person name="Glavina del Rio T."/>
            <person name="Hammon N."/>
            <person name="Israni S."/>
            <person name="Dalin E."/>
            <person name="Tice H."/>
            <person name="Pitluck S."/>
            <person name="Sims D.R."/>
            <person name="Brettin T."/>
            <person name="Bruce D."/>
            <person name="Han C."/>
            <person name="Tapia R."/>
            <person name="Brainard J."/>
            <person name="Schmutz J."/>
            <person name="Larimer F."/>
            <person name="Land M."/>
            <person name="Hauser L."/>
            <person name="Kyrpides N."/>
            <person name="Mikhailova N."/>
            <person name="Brettar I."/>
            <person name="Klappenbach J."/>
            <person name="Konstantinidis K."/>
            <person name="Rodrigues J."/>
            <person name="Tiedje J."/>
            <person name="Richardson P."/>
        </authorList>
    </citation>
    <scope>NUCLEOTIDE SEQUENCE [LARGE SCALE GENOMIC DNA]</scope>
    <source>
        <strain>OS155 / ATCC BAA-1091</strain>
    </source>
</reference>